<sequence>MRSVLYSYILFLSCIIINGRDIAPHAPSNGKCKDNEYRSRNLCCLSCPPGTYASRLCDSKTNTQCTPCGSDTFTSHNNHLQACLSCNGRCDSNQVETRSCNTTHNRICECSPGYYCLLKGASGCRTCISKTKCGIGYGVSGYTSTGDVICSPCGPGTYSHTVSSTDKCEPVVTSNTFNYIDVEINLYPVNDTSCTRTTTTGLSESISTSELTITMNHKDCDPVFRAEYFSVLNNVATSGFFTGENRYQNTSKICTLNFEIKCNNKDSSSKQLTKTKNDTIMPHSETVTLVGDCLSSVDIYILYSNTNTQDYENDTISYHMGNVLDVNSHMPASCDIHKLITNSQNPTHL</sequence>
<protein>
    <recommendedName>
        <fullName>Soluble TNF receptor II</fullName>
    </recommendedName>
    <alternativeName>
        <fullName>Cytokine response-modifying protein B</fullName>
        <shortName>CrmB</shortName>
    </alternativeName>
</protein>
<evidence type="ECO:0000250" key="1">
    <source>
        <dbReference type="UniProtKB" id="O73559"/>
    </source>
</evidence>
<evidence type="ECO:0000250" key="2">
    <source>
        <dbReference type="UniProtKB" id="P0DSV7"/>
    </source>
</evidence>
<evidence type="ECO:0000250" key="3">
    <source>
        <dbReference type="UniProtKB" id="Q76ZJ3"/>
    </source>
</evidence>
<evidence type="ECO:0000255" key="4"/>
<evidence type="ECO:0000255" key="5">
    <source>
        <dbReference type="PROSITE-ProRule" id="PRU00206"/>
    </source>
</evidence>
<evidence type="ECO:0000255" key="6">
    <source>
        <dbReference type="PROSITE-ProRule" id="PRU00498"/>
    </source>
</evidence>
<evidence type="ECO:0000305" key="7"/>
<name>CRMB_MONPV</name>
<reference key="1">
    <citation type="journal article" date="2022" name="J. Infect. Dis.">
        <title>Exportation of Monkeypox virus from the African continent.</title>
        <authorList>
            <person name="Mauldin M.R."/>
            <person name="McCollum A.M."/>
            <person name="Nakazawa Y.J."/>
            <person name="Mandra A."/>
            <person name="Whitehouse E.R."/>
            <person name="Davidson W."/>
            <person name="Zhao H."/>
            <person name="Gao J."/>
            <person name="Li Y."/>
            <person name="Doty J."/>
            <person name="Yinka-Ogunleye A."/>
            <person name="Akinpelu A."/>
            <person name="Aruna O."/>
            <person name="Naidoo D."/>
            <person name="Lewandowski K."/>
            <person name="Afrough B."/>
            <person name="Graham V."/>
            <person name="Aarons E."/>
            <person name="Hewson R."/>
            <person name="Vipond R."/>
            <person name="Dunning J."/>
            <person name="Chand M."/>
            <person name="Brown C."/>
            <person name="Cohen-Gihon I."/>
            <person name="Erez N."/>
            <person name="Shifman O."/>
            <person name="Israeli O."/>
            <person name="Sharon M."/>
            <person name="Schwartz E."/>
            <person name="Beth-Din A."/>
            <person name="Zvi A."/>
            <person name="Mak T.M."/>
            <person name="Ng Y.K."/>
            <person name="Cui L."/>
            <person name="Lin R.T.P."/>
            <person name="Olson V.A."/>
            <person name="Brooks T."/>
            <person name="Paran N."/>
            <person name="Ihekweazu C."/>
            <person name="Reynolds M.G."/>
        </authorList>
    </citation>
    <scope>NUCLEOTIDE SEQUENCE [LARGE SCALE GENOMIC DNA]</scope>
    <source>
        <strain>MPXV-M5312_HM12_Rivers</strain>
    </source>
</reference>
<accession>P0DTN0</accession>
<proteinExistence type="inferred from homology"/>
<organism>
    <name type="scientific">Monkeypox virus</name>
    <dbReference type="NCBI Taxonomy" id="10244"/>
    <lineage>
        <taxon>Viruses</taxon>
        <taxon>Varidnaviria</taxon>
        <taxon>Bamfordvirae</taxon>
        <taxon>Nucleocytoviricota</taxon>
        <taxon>Pokkesviricetes</taxon>
        <taxon>Chitovirales</taxon>
        <taxon>Poxviridae</taxon>
        <taxon>Chordopoxvirinae</taxon>
        <taxon>Orthopoxvirus</taxon>
    </lineage>
</organism>
<keyword id="KW-1015">Disulfide bond</keyword>
<keyword id="KW-0325">Glycoprotein</keyword>
<keyword id="KW-1185">Reference proteome</keyword>
<keyword id="KW-0677">Repeat</keyword>
<keyword id="KW-0964">Secreted</keyword>
<keyword id="KW-0732">Signal</keyword>
<gene>
    <name type="primary">OPG002</name>
    <name type="synonym">C22L</name>
    <name type="synonym">J2L</name>
    <name type="ORF">MPXVgp002</name>
</gene>
<feature type="signal peptide" evidence="4">
    <location>
        <begin position="1"/>
        <end position="19"/>
    </location>
</feature>
<feature type="chain" id="PRO_0000457183" description="Soluble TNF receptor II" evidence="4">
    <location>
        <begin position="20"/>
        <end position="349"/>
    </location>
</feature>
<feature type="repeat" description="TNFR-Cys" evidence="4">
    <location>
        <begin position="31"/>
        <end position="65"/>
    </location>
</feature>
<feature type="repeat" description="TNFR-Cys" evidence="4">
    <location>
        <begin position="67"/>
        <end position="108"/>
    </location>
</feature>
<feature type="glycosylation site" description="N-linked (GlcNAc...) asparagine; by host" evidence="6">
    <location>
        <position position="101"/>
    </location>
</feature>
<feature type="glycosylation site" description="N-linked (GlcNAc...) asparagine; by host" evidence="6">
    <location>
        <position position="190"/>
    </location>
</feature>
<feature type="glycosylation site" description="N-linked (GlcNAc...) asparagine; by host" evidence="6">
    <location>
        <position position="249"/>
    </location>
</feature>
<feature type="glycosylation site" description="N-linked (GlcNAc...) asparagine; by host" evidence="6">
    <location>
        <position position="277"/>
    </location>
</feature>
<feature type="glycosylation site" description="N-linked (GlcNAc...) asparagine; by host" evidence="6">
    <location>
        <position position="313"/>
    </location>
</feature>
<feature type="disulfide bond" evidence="5">
    <location>
        <begin position="32"/>
        <end position="43"/>
    </location>
</feature>
<feature type="disulfide bond" evidence="5">
    <location>
        <begin position="44"/>
        <end position="57"/>
    </location>
</feature>
<feature type="disulfide bond" evidence="5">
    <location>
        <begin position="47"/>
        <end position="65"/>
    </location>
</feature>
<feature type="disulfide bond" evidence="5">
    <location>
        <begin position="68"/>
        <end position="83"/>
    </location>
</feature>
<feature type="disulfide bond" evidence="5">
    <location>
        <begin position="86"/>
        <end position="100"/>
    </location>
</feature>
<feature type="disulfide bond" evidence="5">
    <location>
        <begin position="90"/>
        <end position="108"/>
    </location>
</feature>
<organismHost>
    <name type="scientific">Cynomys gunnisoni</name>
    <name type="common">Gunnison's prairie dog</name>
    <name type="synonym">Spermophilus gunnisoni</name>
    <dbReference type="NCBI Taxonomy" id="45479"/>
</organismHost>
<organismHost>
    <name type="scientific">Cynomys leucurus</name>
    <name type="common">White-tailed prairie dog</name>
    <dbReference type="NCBI Taxonomy" id="99825"/>
</organismHost>
<organismHost>
    <name type="scientific">Cynomys ludovicianus</name>
    <name type="common">Black-tailed prairie dog</name>
    <dbReference type="NCBI Taxonomy" id="45480"/>
</organismHost>
<organismHost>
    <name type="scientific">Cynomys mexicanus</name>
    <name type="common">Mexican prairie dog</name>
    <dbReference type="NCBI Taxonomy" id="99826"/>
</organismHost>
<organismHost>
    <name type="scientific">Cynomys parvidens</name>
    <name type="common">Utah prairie dog</name>
    <dbReference type="NCBI Taxonomy" id="99827"/>
</organismHost>
<organismHost>
    <name type="scientific">Gliridae</name>
    <name type="common">dormice</name>
    <dbReference type="NCBI Taxonomy" id="30650"/>
</organismHost>
<organismHost>
    <name type="scientific">Heliosciurus ruwenzorii</name>
    <name type="common">Ruwenzori sun squirrel</name>
    <dbReference type="NCBI Taxonomy" id="226685"/>
</organismHost>
<organismHost>
    <name type="scientific">Homo sapiens</name>
    <name type="common">Human</name>
    <dbReference type="NCBI Taxonomy" id="9606"/>
</organismHost>
<organismHost>
    <name type="scientific">Mus musculus</name>
    <name type="common">Mouse</name>
    <dbReference type="NCBI Taxonomy" id="10090"/>
</organismHost>
<dbReference type="EMBL" id="MT903340">
    <property type="status" value="NOT_ANNOTATED_CDS"/>
    <property type="molecule type" value="Genomic_DNA"/>
</dbReference>
<dbReference type="RefSeq" id="YP_010377003.1">
    <property type="nucleotide sequence ID" value="NC_063383.1"/>
</dbReference>
<dbReference type="RefSeq" id="YP_010377181.1">
    <property type="nucleotide sequence ID" value="NC_063383.1"/>
</dbReference>
<dbReference type="SMR" id="P0DTN0"/>
<dbReference type="GeneID" id="72551418"/>
<dbReference type="GeneID" id="72551594"/>
<dbReference type="Proteomes" id="UP000516359">
    <property type="component" value="Genome"/>
</dbReference>
<dbReference type="GO" id="GO:0005576">
    <property type="term" value="C:extracellular region"/>
    <property type="evidence" value="ECO:0007669"/>
    <property type="project" value="UniProtKB-SubCell"/>
</dbReference>
<dbReference type="GO" id="GO:0043120">
    <property type="term" value="F:tumor necrosis factor binding"/>
    <property type="evidence" value="ECO:0007669"/>
    <property type="project" value="TreeGrafter"/>
</dbReference>
<dbReference type="GO" id="GO:0005031">
    <property type="term" value="F:tumor necrosis factor receptor activity"/>
    <property type="evidence" value="ECO:0007669"/>
    <property type="project" value="InterPro"/>
</dbReference>
<dbReference type="GO" id="GO:0051044">
    <property type="term" value="P:positive regulation of membrane protein ectodomain proteolysis"/>
    <property type="evidence" value="ECO:0007669"/>
    <property type="project" value="TreeGrafter"/>
</dbReference>
<dbReference type="GO" id="GO:0042129">
    <property type="term" value="P:regulation of T cell proliferation"/>
    <property type="evidence" value="ECO:0007669"/>
    <property type="project" value="TreeGrafter"/>
</dbReference>
<dbReference type="GO" id="GO:0052031">
    <property type="term" value="P:symbiont-mediated perturbation of host defense response"/>
    <property type="evidence" value="ECO:0007669"/>
    <property type="project" value="InterPro"/>
</dbReference>
<dbReference type="CDD" id="cd15839">
    <property type="entry name" value="TNFRSF_viral"/>
    <property type="match status" value="1"/>
</dbReference>
<dbReference type="Gene3D" id="2.60.240.20">
    <property type="match status" value="1"/>
</dbReference>
<dbReference type="Gene3D" id="2.10.50.10">
    <property type="entry name" value="Tumor Necrosis Factor Receptor, subunit A, domain 2"/>
    <property type="match status" value="2"/>
</dbReference>
<dbReference type="InterPro" id="IPR010806">
    <property type="entry name" value="Poxvirus_TNF-rcpt-II_C"/>
</dbReference>
<dbReference type="InterPro" id="IPR011172">
    <property type="entry name" value="Poxvirus_TNF_rcpt-II"/>
</dbReference>
<dbReference type="InterPro" id="IPR051670">
    <property type="entry name" value="TNF_chemokine_rcpt-like"/>
</dbReference>
<dbReference type="InterPro" id="IPR001368">
    <property type="entry name" value="TNFR/NGFR_Cys_rich_reg"/>
</dbReference>
<dbReference type="InterPro" id="IPR034059">
    <property type="entry name" value="TNFRSF_N_viral"/>
</dbReference>
<dbReference type="PANTHER" id="PTHR47386">
    <property type="entry name" value="TUMOR NECROSIS FACTOR RECEPTOR SUPERFAMILY MEMBER 1B"/>
    <property type="match status" value="1"/>
</dbReference>
<dbReference type="PANTHER" id="PTHR47386:SF1">
    <property type="entry name" value="TUMOR NECROSIS FACTOR RECEPTOR SUPERFAMILY MEMBER 1B"/>
    <property type="match status" value="1"/>
</dbReference>
<dbReference type="Pfam" id="PF07190">
    <property type="entry name" value="CrmD_SECRET"/>
    <property type="match status" value="1"/>
</dbReference>
<dbReference type="Pfam" id="PF00020">
    <property type="entry name" value="TNFR_c6"/>
    <property type="match status" value="1"/>
</dbReference>
<dbReference type="PIRSF" id="PIRSF001790">
    <property type="entry name" value="TNF_C22L"/>
    <property type="match status" value="1"/>
</dbReference>
<dbReference type="SMART" id="SM00208">
    <property type="entry name" value="TNFR"/>
    <property type="match status" value="3"/>
</dbReference>
<dbReference type="SUPFAM" id="SSF57586">
    <property type="entry name" value="TNF receptor-like"/>
    <property type="match status" value="2"/>
</dbReference>
<dbReference type="PROSITE" id="PS00652">
    <property type="entry name" value="TNFR_NGFR_1"/>
    <property type="match status" value="2"/>
</dbReference>
<dbReference type="PROSITE" id="PS50050">
    <property type="entry name" value="TNFR_NGFR_2"/>
    <property type="match status" value="2"/>
</dbReference>
<comment type="function">
    <text evidence="2">Inhibits host immune defense by binding to host TNF and various chemokines in the extracellular space. Binds host CC chemokines (beta chemokines) and CXC chemokines (alpha chemokines).</text>
</comment>
<comment type="subcellular location">
    <subcellularLocation>
        <location evidence="1">Secreted</location>
    </subcellularLocation>
</comment>
<comment type="induction">
    <text evidence="3">Expressed in the early phase of the viral replicative cycle.</text>
</comment>
<comment type="similarity">
    <text evidence="7">Belongs to the orthopoxvirus OPG002 family.</text>
</comment>